<accession>Q6SWM9</accession>
<gene>
    <name type="primary">UL135</name>
</gene>
<sequence length="308" mass="33410">MVWIWLGVGLLGGTGLASLVLAISLFTQRRGRKRSDETSSRGRLPAAASDKRGACACCYRNPKEDVVEPLDLELGLMRVATHPPTPQVPRCTSLYIGEDGLPIDKPEFPPARFEIPDVSTPGTPTSIDRSPSHCSSLSSLSSSTSVDTVLHQPPPSWKPPPPPGRKKRPPTPPVRAPTTRLSSHRPPTPIPAPRKNLSTPPTKKTPPPTKPKPVGWTPPVTPRPFPKTPTPQKPPRNPRLPRTVGLENLSKVGLSCPCPRPRTPTEPTTLPIVSVSELAPPPRWSDIEELLEQAVQSVMKDAESMQMT</sequence>
<protein>
    <recommendedName>
        <fullName>Protein UL135</fullName>
    </recommendedName>
</protein>
<comment type="function">
    <text evidence="1">Remodels the host actin cytoskeleton in order to impair immune recognition of infected cells. Mechanistically, interacts with members of the host WAVE2 complex and redirects the complex to the plasma membrane. In turn, the efficiency of immune synapse formation is greatly reduced.</text>
</comment>
<comment type="subunit">
    <text evidence="1">Interacts with host components of the WAVE2 complex ABI1, NAP1 and WAVE2. Also interacts with host ABI2 and TLN1.</text>
</comment>
<comment type="subcellular location">
    <subcellularLocation>
        <location evidence="1">Host cell membrane</location>
    </subcellularLocation>
    <subcellularLocation>
        <location evidence="1">Host Golgi apparatus</location>
    </subcellularLocation>
</comment>
<comment type="similarity">
    <text evidence="4">Belongs to the HCMV UL135 family.</text>
</comment>
<reference key="1">
    <citation type="journal article" date="2009" name="J. Gen. Virol.">
        <title>High-throughput sequence analysis of variants of human cytomegalovirus strains Towne and AD169.</title>
        <authorList>
            <person name="Bradley A.J."/>
            <person name="Lurain N.S."/>
            <person name="Ghazal P."/>
            <person name="Trivedi U."/>
            <person name="Cunningham C."/>
            <person name="Baluchova K."/>
            <person name="Gatherer D."/>
            <person name="Wilkinson G.W."/>
            <person name="Dargan D.J."/>
            <person name="Davison A.J."/>
        </authorList>
    </citation>
    <scope>NUCLEOTIDE SEQUENCE [LARGE SCALE GENOMIC DNA]</scope>
</reference>
<reference key="2">
    <citation type="journal article" date="2004" name="J. Gen. Virol.">
        <title>Genetic content of wild-type human cytomegalovirus.</title>
        <authorList>
            <person name="Dolan A."/>
            <person name="Cunningham C."/>
            <person name="Hector R.D."/>
            <person name="Hassan-Walker A.F."/>
            <person name="Lee L."/>
            <person name="Addison C."/>
            <person name="Dargan D.J."/>
            <person name="McGeoch D.J."/>
            <person name="Gatherer D."/>
            <person name="Emery V.C."/>
            <person name="Griffiths P.D."/>
            <person name="Sinzger C."/>
            <person name="McSharry B.P."/>
            <person name="Wilkinson G.W.G."/>
            <person name="Davison A.J."/>
        </authorList>
    </citation>
    <scope>NUCLEOTIDE SEQUENCE [LARGE SCALE GENOMIC DNA]</scope>
</reference>
<evidence type="ECO:0000250" key="1">
    <source>
        <dbReference type="UniProtKB" id="F5HAQ7"/>
    </source>
</evidence>
<evidence type="ECO:0000255" key="2"/>
<evidence type="ECO:0000256" key="3">
    <source>
        <dbReference type="SAM" id="MobiDB-lite"/>
    </source>
</evidence>
<evidence type="ECO:0000305" key="4"/>
<organismHost>
    <name type="scientific">Homo sapiens</name>
    <name type="common">Human</name>
    <dbReference type="NCBI Taxonomy" id="9606"/>
</organismHost>
<proteinExistence type="inferred from homology"/>
<feature type="signal peptide" evidence="2">
    <location>
        <begin position="1"/>
        <end position="22"/>
    </location>
</feature>
<feature type="chain" id="PRO_0000416732" description="Protein UL135">
    <location>
        <begin position="23"/>
        <end position="308"/>
    </location>
</feature>
<feature type="region of interest" description="Disordered" evidence="3">
    <location>
        <begin position="103"/>
        <end position="274"/>
    </location>
</feature>
<feature type="compositionally biased region" description="Polar residues" evidence="3">
    <location>
        <begin position="120"/>
        <end position="129"/>
    </location>
</feature>
<feature type="compositionally biased region" description="Low complexity" evidence="3">
    <location>
        <begin position="132"/>
        <end position="145"/>
    </location>
</feature>
<feature type="compositionally biased region" description="Pro residues" evidence="3">
    <location>
        <begin position="152"/>
        <end position="163"/>
    </location>
</feature>
<feature type="compositionally biased region" description="Pro residues" evidence="3">
    <location>
        <begin position="219"/>
        <end position="238"/>
    </location>
</feature>
<name>UL135_HCMVT</name>
<keyword id="KW-1032">Host cell membrane</keyword>
<keyword id="KW-1040">Host Golgi apparatus</keyword>
<keyword id="KW-1043">Host membrane</keyword>
<keyword id="KW-0945">Host-virus interaction</keyword>
<keyword id="KW-0472">Membrane</keyword>
<keyword id="KW-1131">Modulation of host NK-cell activity by virus</keyword>
<keyword id="KW-0732">Signal</keyword>
<keyword id="KW-0899">Viral immunoevasion</keyword>
<dbReference type="EMBL" id="FJ616285">
    <property type="protein sequence ID" value="AAR31467.1"/>
    <property type="molecule type" value="Genomic_DNA"/>
</dbReference>
<dbReference type="SMR" id="Q6SWM9"/>
<dbReference type="Proteomes" id="UP000006907">
    <property type="component" value="Segment"/>
</dbReference>
<dbReference type="GO" id="GO:0044177">
    <property type="term" value="C:host cell Golgi apparatus"/>
    <property type="evidence" value="ECO:0007669"/>
    <property type="project" value="UniProtKB-SubCell"/>
</dbReference>
<dbReference type="GO" id="GO:0020002">
    <property type="term" value="C:host cell plasma membrane"/>
    <property type="evidence" value="ECO:0007669"/>
    <property type="project" value="UniProtKB-SubCell"/>
</dbReference>
<dbReference type="GO" id="GO:0016020">
    <property type="term" value="C:membrane"/>
    <property type="evidence" value="ECO:0007669"/>
    <property type="project" value="UniProtKB-KW"/>
</dbReference>
<dbReference type="GO" id="GO:0039671">
    <property type="term" value="P:symbiont-mediated perturbation of host natural killer cell mediated immune response"/>
    <property type="evidence" value="ECO:0007669"/>
    <property type="project" value="UniProtKB-KW"/>
</dbReference>
<dbReference type="PRINTS" id="PR01217">
    <property type="entry name" value="PRICHEXTENSN"/>
</dbReference>
<organism>
    <name type="scientific">Human cytomegalovirus (strain Towne)</name>
    <name type="common">HHV-5</name>
    <name type="synonym">Human herpesvirus 5</name>
    <dbReference type="NCBI Taxonomy" id="10363"/>
    <lineage>
        <taxon>Viruses</taxon>
        <taxon>Duplodnaviria</taxon>
        <taxon>Heunggongvirae</taxon>
        <taxon>Peploviricota</taxon>
        <taxon>Herviviricetes</taxon>
        <taxon>Herpesvirales</taxon>
        <taxon>Orthoherpesviridae</taxon>
        <taxon>Betaherpesvirinae</taxon>
        <taxon>Cytomegalovirus</taxon>
        <taxon>Cytomegalovirus humanbeta5</taxon>
        <taxon>Human cytomegalovirus</taxon>
    </lineage>
</organism>